<name>FUT5_GORGO</name>
<gene>
    <name evidence="2" type="primary">FUT5</name>
</gene>
<organism>
    <name type="scientific">Gorilla gorilla gorilla</name>
    <name type="common">Western lowland gorilla</name>
    <dbReference type="NCBI Taxonomy" id="9595"/>
    <lineage>
        <taxon>Eukaryota</taxon>
        <taxon>Metazoa</taxon>
        <taxon>Chordata</taxon>
        <taxon>Craniata</taxon>
        <taxon>Vertebrata</taxon>
        <taxon>Euteleostomi</taxon>
        <taxon>Mammalia</taxon>
        <taxon>Eutheria</taxon>
        <taxon>Euarchontoglires</taxon>
        <taxon>Primates</taxon>
        <taxon>Haplorrhini</taxon>
        <taxon>Catarrhini</taxon>
        <taxon>Hominidae</taxon>
        <taxon>Gorilla</taxon>
    </lineage>
</organism>
<feature type="chain" id="PRO_0000221104" description="4-galactosyl-N-acetylglucosaminide 3-alpha-L-fucosyltransferase FUT5">
    <location>
        <begin position="1"/>
        <end position="374"/>
    </location>
</feature>
<feature type="topological domain" description="Cytoplasmic" evidence="3">
    <location>
        <begin position="1"/>
        <end position="15"/>
    </location>
</feature>
<feature type="transmembrane region" description="Helical; Signal-anchor for type II membrane protein" evidence="3">
    <location>
        <begin position="16"/>
        <end position="34"/>
    </location>
</feature>
<feature type="topological domain" description="Lumenal" evidence="3">
    <location>
        <begin position="35"/>
        <end position="374"/>
    </location>
</feature>
<feature type="glycosylation site" description="N-linked (GlcNAc...) asparagine" evidence="3">
    <location>
        <position position="60"/>
    </location>
</feature>
<feature type="glycosylation site" description="N-linked (GlcNAc...) asparagine" evidence="3">
    <location>
        <position position="105"/>
    </location>
</feature>
<feature type="glycosylation site" description="N-linked (GlcNAc...) asparagine" evidence="3">
    <location>
        <position position="167"/>
    </location>
</feature>
<feature type="glycosylation site" description="N-linked (GlcNAc...) asparagine" evidence="3">
    <location>
        <position position="198"/>
    </location>
</feature>
<accession>Q8HYJ7</accession>
<reference key="1">
    <citation type="journal article" date="2004" name="Glycobiology">
        <title>Structure/function study of Lewis alpha3- and alpha3/4-fucosyltransferases: the alpha1,4 fucosylation requires an aromatic residue in the acceptor-binding domain.</title>
        <authorList>
            <person name="Dupuy F."/>
            <person name="Germot A."/>
            <person name="Julien R."/>
            <person name="Maftah A."/>
        </authorList>
    </citation>
    <scope>NUCLEOTIDE SEQUENCE [GENOMIC DNA]</scope>
</reference>
<sequence>MDPLGPAKPQWLWRRCLAGLLFQLLVAVCFFSYLRVSQDHATGSPRPGLMVVEPVTRAPNGSRCQDSAATPAHPTLLILLWTWPFNTPVALPRCSEMVPGAADCNITANSNVYPQADAVIVHHWDIMYNPSANLLPPTRPQGQRWIWFSMESPSNCRHLEALDGYFNLTMSYRSDSDIFTPYGWLEPWSGQPAHPPLNLSAKTELVAWAVSNWKPDSARVRYYQSLKAHLKVDVYGHSHKPLPKGTMMETLSRYKFYLAFENSLHLDYITEKLWRNALEAWAVPVVLGPSRGNYERFLPPDAFIHVDDFQSPKDLARYLQELDKDHARYLSYFRWRETLRPRSFSWALDFCKACWKLQQESRYQTVRSIAAWFT</sequence>
<dbReference type="EC" id="2.4.1.152" evidence="2"/>
<dbReference type="EC" id="2.4.1.65" evidence="2"/>
<dbReference type="EMBL" id="AF515436">
    <property type="protein sequence ID" value="AAO15992.1"/>
    <property type="molecule type" value="Genomic_DNA"/>
</dbReference>
<dbReference type="SMR" id="Q8HYJ7"/>
<dbReference type="FunCoup" id="Q8HYJ7">
    <property type="interactions" value="264"/>
</dbReference>
<dbReference type="STRING" id="9593.ENSGGOP00000006125"/>
<dbReference type="CAZy" id="GT10">
    <property type="family name" value="Glycosyltransferase Family 10"/>
</dbReference>
<dbReference type="GlyCosmos" id="Q8HYJ7">
    <property type="glycosylation" value="4 sites, No reported glycans"/>
</dbReference>
<dbReference type="eggNOG" id="KOG2619">
    <property type="taxonomic scope" value="Eukaryota"/>
</dbReference>
<dbReference type="InParanoid" id="Q8HYJ7"/>
<dbReference type="BRENDA" id="2.4.1.65">
    <property type="organism ID" value="2496"/>
</dbReference>
<dbReference type="UniPathway" id="UPA00378"/>
<dbReference type="Proteomes" id="UP000001519">
    <property type="component" value="Unplaced"/>
</dbReference>
<dbReference type="GO" id="GO:0032580">
    <property type="term" value="C:Golgi cisterna membrane"/>
    <property type="evidence" value="ECO:0007669"/>
    <property type="project" value="UniProtKB-SubCell"/>
</dbReference>
<dbReference type="GO" id="GO:0017060">
    <property type="term" value="F:3-galactosyl-N-acetylglucosaminide 4-alpha-L-fucosyltransferase activity"/>
    <property type="evidence" value="ECO:0000250"/>
    <property type="project" value="UniProtKB"/>
</dbReference>
<dbReference type="GO" id="GO:0017083">
    <property type="term" value="F:4-galactosyl-N-acetylglucosaminide 3-alpha-L-fucosyltransferase activity"/>
    <property type="evidence" value="ECO:0000250"/>
    <property type="project" value="UniProtKB"/>
</dbReference>
<dbReference type="GO" id="GO:0046920">
    <property type="term" value="F:alpha-(1-&gt;3)-fucosyltransferase activity"/>
    <property type="evidence" value="ECO:0000318"/>
    <property type="project" value="GO_Central"/>
</dbReference>
<dbReference type="GO" id="GO:0006672">
    <property type="term" value="P:ceramide metabolic process"/>
    <property type="evidence" value="ECO:0000250"/>
    <property type="project" value="UniProtKB"/>
</dbReference>
<dbReference type="GO" id="GO:0036065">
    <property type="term" value="P:fucosylation"/>
    <property type="evidence" value="ECO:0000318"/>
    <property type="project" value="GO_Central"/>
</dbReference>
<dbReference type="GO" id="GO:0009311">
    <property type="term" value="P:oligosaccharide metabolic process"/>
    <property type="evidence" value="ECO:0000250"/>
    <property type="project" value="UniProtKB"/>
</dbReference>
<dbReference type="GO" id="GO:0006487">
    <property type="term" value="P:protein N-linked glycosylation"/>
    <property type="evidence" value="ECO:0000250"/>
    <property type="project" value="UniProtKB"/>
</dbReference>
<dbReference type="GO" id="GO:0006493">
    <property type="term" value="P:protein O-linked glycosylation"/>
    <property type="evidence" value="ECO:0000250"/>
    <property type="project" value="UniProtKB"/>
</dbReference>
<dbReference type="FunFam" id="3.40.50.11660:FF:000001">
    <property type="entry name" value="alpha-(1,3)-fucosyltransferase 9"/>
    <property type="match status" value="1"/>
</dbReference>
<dbReference type="Gene3D" id="3.40.50.11660">
    <property type="entry name" value="Glycosyl transferase family 10, C-terminal domain"/>
    <property type="match status" value="1"/>
</dbReference>
<dbReference type="InterPro" id="IPR055270">
    <property type="entry name" value="Glyco_tran_10_C"/>
</dbReference>
<dbReference type="InterPro" id="IPR031481">
    <property type="entry name" value="Glyco_tran_10_N"/>
</dbReference>
<dbReference type="InterPro" id="IPR001503">
    <property type="entry name" value="Glyco_trans_10"/>
</dbReference>
<dbReference type="InterPro" id="IPR038577">
    <property type="entry name" value="GT10-like_C_sf"/>
</dbReference>
<dbReference type="PANTHER" id="PTHR11929:SF11">
    <property type="entry name" value="4-GALACTOSYL-N-ACETYLGLUCOSAMINIDE 3-ALPHA-L-FUCOSYLTRANSFERASE FUT5"/>
    <property type="match status" value="1"/>
</dbReference>
<dbReference type="PANTHER" id="PTHR11929">
    <property type="entry name" value="ALPHA- 1,3 -FUCOSYLTRANSFERASE"/>
    <property type="match status" value="1"/>
</dbReference>
<dbReference type="Pfam" id="PF17039">
    <property type="entry name" value="Glyco_tran_10_N"/>
    <property type="match status" value="1"/>
</dbReference>
<dbReference type="Pfam" id="PF00852">
    <property type="entry name" value="Glyco_transf_10"/>
    <property type="match status" value="1"/>
</dbReference>
<dbReference type="SUPFAM" id="SSF53756">
    <property type="entry name" value="UDP-Glycosyltransferase/glycogen phosphorylase"/>
    <property type="match status" value="1"/>
</dbReference>
<evidence type="ECO:0000250" key="1"/>
<evidence type="ECO:0000250" key="2">
    <source>
        <dbReference type="UniProtKB" id="Q11128"/>
    </source>
</evidence>
<evidence type="ECO:0000255" key="3"/>
<evidence type="ECO:0000305" key="4"/>
<protein>
    <recommendedName>
        <fullName evidence="2">4-galactosyl-N-acetylglucosaminide 3-alpha-L-fucosyltransferase FUT5</fullName>
        <ecNumber evidence="2">2.4.1.152</ecNumber>
    </recommendedName>
    <alternativeName>
        <fullName evidence="2">3-galactosyl-N-acetylglucosaminide 4-alpha-L-fucosyltransferase FUT5</fullName>
        <ecNumber evidence="2">2.4.1.65</ecNumber>
    </alternativeName>
    <alternativeName>
        <fullName>Fucosyltransferase 5</fullName>
    </alternativeName>
    <alternativeName>
        <fullName>Fucosyltransferase V</fullName>
        <shortName evidence="2">Fuc-TV</shortName>
        <shortName>FucT-V</shortName>
    </alternativeName>
    <alternativeName>
        <fullName>Galactoside 3-L-fucosyltransferase</fullName>
    </alternativeName>
</protein>
<comment type="function">
    <text evidence="2">Catalyzes preferentially the transfer of L-fucose, from a guanosine diphosphate-beta-L-fucose, to the N-acetyl-beta-D-glucosamine (GlcNAc) of an N-acetyllactosamine unit (type 2 chain) of an oligosaccharide, or a glycoprotein- and a glycolipid-linked N-acetyllactosamine unit via an alpha (1,3) linkage and participates in the surface expression of VIM-2, Lewis X/SSEA-1 and sialyl Lewis X antigens. Preferentially transfers fucose to the GlcNAc of an internal N-acetyllactosamine unit of a poly-N-acetyllactosamine chain acceptor substrate. Also catalyzes to a lesser extend the transfer of L-fucose to the GlcNAc of a type 1 (beta-D-galactosyl-(1-&gt;3)-N-acetyl-beta-D-glucosaminyl) or H-type 1 (alpha-L-Fuc-(1-&gt;2)-beta-D-Gal-(1-&gt;3)-D-GlcNAc) chain oligosaccharide via an alpha (1,4) linkage. Preferentially catalyzes sialylated type 2 oligosaccharide acceptors over neutral type 2 or H type 2 (alpha-L-Fuc-(1-&gt;2)-beta-D-Gal-(1-&gt;4)-D-GlcNAc) oligosaccharide acceptors. Lactose-based structures are also acceptor substrates.</text>
</comment>
<comment type="catalytic activity">
    <reaction evidence="2">
        <text>a beta-D-galactosyl-(1-&gt;3)-N-acetyl-beta-D-glucosaminyl derivative + GDP-beta-L-fucose = a beta-D-galactosyl-(1-&gt;3)-[alpha-L-fucosyl-(1-&gt;4)]-N-acetyl-beta-D-glucosaminyl derivative + GDP + H(+)</text>
        <dbReference type="Rhea" id="RHEA:23628"/>
        <dbReference type="ChEBI" id="CHEBI:15378"/>
        <dbReference type="ChEBI" id="CHEBI:57273"/>
        <dbReference type="ChEBI" id="CHEBI:58189"/>
        <dbReference type="ChEBI" id="CHEBI:133506"/>
        <dbReference type="ChEBI" id="CHEBI:140304"/>
        <dbReference type="EC" id="2.4.1.65"/>
    </reaction>
    <physiologicalReaction direction="left-to-right" evidence="2">
        <dbReference type="Rhea" id="RHEA:23629"/>
    </physiologicalReaction>
</comment>
<comment type="catalytic activity">
    <reaction evidence="2">
        <text>an N-acetyl-alpha-neuraminyl-(2-&gt;3)-beta-D-galactosyl-(1-&gt;4)-N-acetyl-beta-D-glucosaminyl derivative + GDP-beta-L-fucose = an alpha-Neu5Ac-(2-&gt;3)-beta-D-Gal-(1-&gt;4)-[alpha-L-Fuc-(1-&gt;3)]-beta-D-GlcNAc derivative + GDP + H(+)</text>
        <dbReference type="Rhea" id="RHEA:56076"/>
        <dbReference type="ChEBI" id="CHEBI:15378"/>
        <dbReference type="ChEBI" id="CHEBI:57273"/>
        <dbReference type="ChEBI" id="CHEBI:58189"/>
        <dbReference type="ChEBI" id="CHEBI:136545"/>
        <dbReference type="ChEBI" id="CHEBI:139509"/>
    </reaction>
    <physiologicalReaction direction="left-to-right" evidence="2">
        <dbReference type="Rhea" id="RHEA:56077"/>
    </physiologicalReaction>
</comment>
<comment type="catalytic activity">
    <reaction evidence="2">
        <text>an alpha-Neu5Ac-(2-&gt;3)-beta-D-Gal-(1-&gt;4)-beta-D-GlcNAc-(1-&gt;3)-beta-D-Gal-(1-&gt;4)-[alpha-L-Fuc-(1-&gt;3)]-beta-D-GlcNAc derivative + GDP-beta-L-fucose = an alpha-Neu5Ac-(2-&gt;3)-beta-D-Gal-(1-&gt;4)-[alpha-L-Fuc-(1-&gt;3)]-beta-D-GlcNAc-(1-&gt;3)-beta-D-Gal-(1-&gt;4)-[alpha-L-Fuc-(1-&gt;3)]-beta-D-GlcNAc derivative + GDP + H(+)</text>
        <dbReference type="Rhea" id="RHEA:52864"/>
        <dbReference type="ChEBI" id="CHEBI:15378"/>
        <dbReference type="ChEBI" id="CHEBI:57273"/>
        <dbReference type="ChEBI" id="CHEBI:58189"/>
        <dbReference type="ChEBI" id="CHEBI:145342"/>
        <dbReference type="ChEBI" id="CHEBI:145343"/>
    </reaction>
    <physiologicalReaction direction="left-to-right" evidence="2">
        <dbReference type="Rhea" id="RHEA:52865"/>
    </physiologicalReaction>
</comment>
<comment type="catalytic activity">
    <reaction evidence="2">
        <text>a beta-D-galactosyl-(1-&gt;4)-N-acetyl-beta-D-glucosaminyl derivative + GDP-beta-L-fucose = a beta-D-galactosyl-(1-&gt;4)-[alpha-L-fucosyl-(1-&gt;3)]-N-acetyl-beta-D-glucosaminyl derivative + GDP + H(+)</text>
        <dbReference type="Rhea" id="RHEA:14257"/>
        <dbReference type="ChEBI" id="CHEBI:15378"/>
        <dbReference type="ChEBI" id="CHEBI:57273"/>
        <dbReference type="ChEBI" id="CHEBI:58189"/>
        <dbReference type="ChEBI" id="CHEBI:133507"/>
        <dbReference type="ChEBI" id="CHEBI:137941"/>
        <dbReference type="EC" id="2.4.1.152"/>
    </reaction>
    <physiologicalReaction direction="left-to-right" evidence="2">
        <dbReference type="Rhea" id="RHEA:14258"/>
    </physiologicalReaction>
</comment>
<comment type="catalytic activity">
    <reaction evidence="2">
        <text>a neolactoside nLc4Cer + GDP-beta-L-fucose = a neolactoside III(3)-alpha-Fuc-nLc4Cer + GDP + H(+)</text>
        <dbReference type="Rhea" id="RHEA:48376"/>
        <dbReference type="ChEBI" id="CHEBI:15378"/>
        <dbReference type="ChEBI" id="CHEBI:57273"/>
        <dbReference type="ChEBI" id="CHEBI:58189"/>
        <dbReference type="ChEBI" id="CHEBI:90376"/>
        <dbReference type="ChEBI" id="CHEBI:90379"/>
    </reaction>
    <physiologicalReaction direction="left-to-right" evidence="2">
        <dbReference type="Rhea" id="RHEA:48377"/>
    </physiologicalReaction>
</comment>
<comment type="catalytic activity">
    <reaction evidence="2">
        <text>a neolactoside nLc6Cer + GDP-beta-L-fucose = beta-D-galactosyl-(1-&gt;4)-N-acetyl-beta-D-glucosaminyl-(1-&gt;3)-beta-D-galactosyl-(1-&gt;4)-[alpha-L-fucosyl-(1-&gt;3)]-N-acetyl-beta-D-glucosaminyl-(1-&gt;3)-beta-D-galactosyl-(1-&gt;4)-beta-D-glucosyl-(1&lt;-&gt;1')-ceramide + GDP + H(+)</text>
        <dbReference type="Rhea" id="RHEA:48364"/>
        <dbReference type="ChEBI" id="CHEBI:15378"/>
        <dbReference type="ChEBI" id="CHEBI:57273"/>
        <dbReference type="ChEBI" id="CHEBI:58189"/>
        <dbReference type="ChEBI" id="CHEBI:90357"/>
        <dbReference type="ChEBI" id="CHEBI:90358"/>
    </reaction>
    <physiologicalReaction direction="left-to-right" evidence="2">
        <dbReference type="Rhea" id="RHEA:48365"/>
    </physiologicalReaction>
</comment>
<comment type="catalytic activity">
    <reaction evidence="2">
        <text>a neolactoside nLc6Cer(d18:1(4E)) + GDP-beta-L-fucose = a neolactoside III(3)-alpha-Fuc-nLc6Cer(d18:1(4E)) + GDP + H(+)</text>
        <dbReference type="Rhea" id="RHEA:48336"/>
        <dbReference type="ChEBI" id="CHEBI:15378"/>
        <dbReference type="ChEBI" id="CHEBI:57273"/>
        <dbReference type="ChEBI" id="CHEBI:58189"/>
        <dbReference type="ChEBI" id="CHEBI:61610"/>
        <dbReference type="ChEBI" id="CHEBI:90307"/>
    </reaction>
    <physiologicalReaction direction="left-to-right" evidence="2">
        <dbReference type="Rhea" id="RHEA:48337"/>
    </physiologicalReaction>
</comment>
<comment type="catalytic activity">
    <reaction evidence="2">
        <text>a neolactoside nLc4Cer(d18:1(4E)) + GDP-beta-L-fucose = a neolactoside III(3)-alpha-Fuc-nLc4Cer(d18:1(4E)) + GDP + H(+)</text>
        <dbReference type="Rhea" id="RHEA:48332"/>
        <dbReference type="ChEBI" id="CHEBI:15378"/>
        <dbReference type="ChEBI" id="CHEBI:17006"/>
        <dbReference type="ChEBI" id="CHEBI:57273"/>
        <dbReference type="ChEBI" id="CHEBI:58189"/>
        <dbReference type="ChEBI" id="CHEBI:77240"/>
    </reaction>
    <physiologicalReaction direction="left-to-right" evidence="2">
        <dbReference type="Rhea" id="RHEA:48333"/>
    </physiologicalReaction>
</comment>
<comment type="catalytic activity">
    <reaction evidence="2">
        <text>a neolactoside VI(3)-alpha-NeuNAc-nLc6Cer + GDP-beta-L-fucose = a neolactoside VI(3)-alpha-NeuAc,III(3)-alphaFuc-nLc6Cer + GDP + H(+)</text>
        <dbReference type="Rhea" id="RHEA:48352"/>
        <dbReference type="ChEBI" id="CHEBI:15378"/>
        <dbReference type="ChEBI" id="CHEBI:57273"/>
        <dbReference type="ChEBI" id="CHEBI:58189"/>
        <dbReference type="ChEBI" id="CHEBI:90335"/>
        <dbReference type="ChEBI" id="CHEBI:90339"/>
    </reaction>
    <physiologicalReaction direction="left-to-right" evidence="2">
        <dbReference type="Rhea" id="RHEA:48353"/>
    </physiologicalReaction>
</comment>
<comment type="catalytic activity">
    <reaction evidence="2">
        <text>beta-D-galactosyl-(1-&gt;4)-N-acetyl-D-glucosamine + GDP-beta-L-fucose = beta-D-galactosyl-(1-&gt;4)-[alpha-L-fucosyl-(1-&gt;3)]-N-acetyl-D-glucosamine + GDP + H(+)</text>
        <dbReference type="Rhea" id="RHEA:62824"/>
        <dbReference type="ChEBI" id="CHEBI:15378"/>
        <dbReference type="ChEBI" id="CHEBI:57273"/>
        <dbReference type="ChEBI" id="CHEBI:58189"/>
        <dbReference type="ChEBI" id="CHEBI:60152"/>
        <dbReference type="ChEBI" id="CHEBI:62287"/>
    </reaction>
    <physiologicalReaction direction="left-to-right" evidence="2">
        <dbReference type="Rhea" id="RHEA:62825"/>
    </physiologicalReaction>
</comment>
<comment type="catalytic activity">
    <reaction evidence="2">
        <text>N-acetyl-alpha-neuraminosyl-(2-&gt;3)-beta-D-galactosyl-(1-&gt;4)-N-acetyl-beta-D-glucosamine + GDP-beta-L-fucose = N-acetyl-alpha-neuraminosyl-(2-&gt;3)-beta-D-galactosyl-(1-&gt;4)-[alpha-L-fucosyl-(1-&gt;3)]-N-acetyl-beta-D-glucosamine + GDP + H(+)</text>
        <dbReference type="Rhea" id="RHEA:62836"/>
        <dbReference type="ChEBI" id="CHEBI:15378"/>
        <dbReference type="ChEBI" id="CHEBI:57273"/>
        <dbReference type="ChEBI" id="CHEBI:58189"/>
        <dbReference type="ChEBI" id="CHEBI:145937"/>
        <dbReference type="ChEBI" id="CHEBI:145938"/>
    </reaction>
    <physiologicalReaction direction="left-to-right" evidence="2">
        <dbReference type="Rhea" id="RHEA:62837"/>
    </physiologicalReaction>
</comment>
<comment type="catalytic activity">
    <reaction evidence="2">
        <text>alpha-L-Fuc-(1-&gt;2)-beta-D-Gal-(1-&gt;4)-D-GlcNAc + GDP-beta-L-fucose = alpha-L-Fuc-(1-&gt;2)-beta-D-Gal-(1-&gt;4)-[alpha-L-Fuc-(1-&gt;3)]-D-GlcNAc + GDP + H(+)</text>
        <dbReference type="Rhea" id="RHEA:62900"/>
        <dbReference type="ChEBI" id="CHEBI:15378"/>
        <dbReference type="ChEBI" id="CHEBI:57273"/>
        <dbReference type="ChEBI" id="CHEBI:58189"/>
        <dbReference type="ChEBI" id="CHEBI:62263"/>
        <dbReference type="ChEBI" id="CHEBI:62507"/>
    </reaction>
</comment>
<comment type="catalytic activity">
    <reaction evidence="2">
        <text>an alpha-Neu5Ac-(2-&gt;3)-beta-D-Gal-(1-&gt;3)-D-GlcNAc derivative + GDP-beta-L-fucose = an alpha-Neu5Ac-(2-&gt;3)-beta-D-Gal-(1-&gt;3)-[alpha-L-Fuc-(1-&gt;4)]-beta-D-GlcNAc derivative + GDP + H(+)</text>
        <dbReference type="Rhea" id="RHEA:62904"/>
        <dbReference type="ChEBI" id="CHEBI:15378"/>
        <dbReference type="ChEBI" id="CHEBI:57273"/>
        <dbReference type="ChEBI" id="CHEBI:58189"/>
        <dbReference type="ChEBI" id="CHEBI:146021"/>
        <dbReference type="ChEBI" id="CHEBI:146022"/>
    </reaction>
    <physiologicalReaction direction="left-to-right" evidence="2">
        <dbReference type="Rhea" id="RHEA:62905"/>
    </physiologicalReaction>
</comment>
<comment type="pathway">
    <text evidence="2">Protein modification; protein glycosylation.</text>
</comment>
<comment type="subcellular location">
    <subcellularLocation>
        <location evidence="1">Golgi apparatus</location>
        <location evidence="1">Golgi stack membrane</location>
        <topology evidence="1">Single-pass type II membrane protein</topology>
    </subcellularLocation>
    <text evidence="1">Membrane-bound form in trans cisternae of Golgi.</text>
</comment>
<comment type="similarity">
    <text evidence="4">Belongs to the glycosyltransferase 10 family.</text>
</comment>
<proteinExistence type="inferred from homology"/>
<keyword id="KW-0325">Glycoprotein</keyword>
<keyword id="KW-0328">Glycosyltransferase</keyword>
<keyword id="KW-0333">Golgi apparatus</keyword>
<keyword id="KW-0443">Lipid metabolism</keyword>
<keyword id="KW-0472">Membrane</keyword>
<keyword id="KW-1185">Reference proteome</keyword>
<keyword id="KW-0735">Signal-anchor</keyword>
<keyword id="KW-0808">Transferase</keyword>
<keyword id="KW-0812">Transmembrane</keyword>
<keyword id="KW-1133">Transmembrane helix</keyword>